<proteinExistence type="inferred from homology"/>
<reference key="1">
    <citation type="journal article" date="2009" name="PLoS ONE">
        <title>The complete genome of Teredinibacter turnerae T7901: an intracellular endosymbiont of marine wood-boring bivalves (shipworms).</title>
        <authorList>
            <person name="Yang J.C."/>
            <person name="Madupu R."/>
            <person name="Durkin A.S."/>
            <person name="Ekborg N.A."/>
            <person name="Pedamallu C.S."/>
            <person name="Hostetler J.B."/>
            <person name="Radune D."/>
            <person name="Toms B.S."/>
            <person name="Henrissat B."/>
            <person name="Coutinho P.M."/>
            <person name="Schwarz S."/>
            <person name="Field L."/>
            <person name="Trindade-Silva A.E."/>
            <person name="Soares C.A.G."/>
            <person name="Elshahawi S."/>
            <person name="Hanora A."/>
            <person name="Schmidt E.W."/>
            <person name="Haygood M.G."/>
            <person name="Posfai J."/>
            <person name="Benner J."/>
            <person name="Madinger C."/>
            <person name="Nove J."/>
            <person name="Anton B."/>
            <person name="Chaudhary K."/>
            <person name="Foster J."/>
            <person name="Holman A."/>
            <person name="Kumar S."/>
            <person name="Lessard P.A."/>
            <person name="Luyten Y.A."/>
            <person name="Slatko B."/>
            <person name="Wood N."/>
            <person name="Wu B."/>
            <person name="Teplitski M."/>
            <person name="Mougous J.D."/>
            <person name="Ward N."/>
            <person name="Eisen J.A."/>
            <person name="Badger J.H."/>
            <person name="Distel D.L."/>
        </authorList>
    </citation>
    <scope>NUCLEOTIDE SEQUENCE [LARGE SCALE GENOMIC DNA]</scope>
    <source>
        <strain>ATCC 39867 / T7901</strain>
    </source>
</reference>
<organism>
    <name type="scientific">Teredinibacter turnerae (strain ATCC 39867 / T7901)</name>
    <dbReference type="NCBI Taxonomy" id="377629"/>
    <lineage>
        <taxon>Bacteria</taxon>
        <taxon>Pseudomonadati</taxon>
        <taxon>Pseudomonadota</taxon>
        <taxon>Gammaproteobacteria</taxon>
        <taxon>Cellvibrionales</taxon>
        <taxon>Cellvibrionaceae</taxon>
        <taxon>Teredinibacter</taxon>
    </lineage>
</organism>
<keyword id="KW-0963">Cytoplasm</keyword>
<keyword id="KW-1185">Reference proteome</keyword>
<keyword id="KW-0694">RNA-binding</keyword>
<sequence length="158" mass="18268">MAKKKTQNSNTIALNKKARHDYFIEERFEAGVSLAGWEVKALRAGKGQLTDSYVIFKNGEAWLLGAQIQPLPQASTHFVTDPTRTRKLLLHRKELTKLKEATEQKGHTVVATALYWKHHLVKCEIATAKGKQLHDKRQTEKERDWNKQKQRILQTNQR</sequence>
<evidence type="ECO:0000255" key="1">
    <source>
        <dbReference type="HAMAP-Rule" id="MF_00023"/>
    </source>
</evidence>
<evidence type="ECO:0000256" key="2">
    <source>
        <dbReference type="SAM" id="MobiDB-lite"/>
    </source>
</evidence>
<gene>
    <name evidence="1" type="primary">smpB</name>
    <name type="ordered locus">TERTU_3305</name>
</gene>
<protein>
    <recommendedName>
        <fullName evidence="1">SsrA-binding protein</fullName>
    </recommendedName>
    <alternativeName>
        <fullName evidence="1">Small protein B</fullName>
    </alternativeName>
</protein>
<accession>C5BQH7</accession>
<feature type="chain" id="PRO_1000201943" description="SsrA-binding protein">
    <location>
        <begin position="1"/>
        <end position="158"/>
    </location>
</feature>
<feature type="region of interest" description="Disordered" evidence="2">
    <location>
        <begin position="131"/>
        <end position="158"/>
    </location>
</feature>
<feature type="compositionally biased region" description="Basic and acidic residues" evidence="2">
    <location>
        <begin position="132"/>
        <end position="147"/>
    </location>
</feature>
<comment type="function">
    <text evidence="1">Required for rescue of stalled ribosomes mediated by trans-translation. Binds to transfer-messenger RNA (tmRNA), required for stable association of tmRNA with ribosomes. tmRNA and SmpB together mimic tRNA shape, replacing the anticodon stem-loop with SmpB. tmRNA is encoded by the ssrA gene; the 2 termini fold to resemble tRNA(Ala) and it encodes a 'tag peptide', a short internal open reading frame. During trans-translation Ala-aminoacylated tmRNA acts like a tRNA, entering the A-site of stalled ribosomes, displacing the stalled mRNA. The ribosome then switches to translate the ORF on the tmRNA; the nascent peptide is terminated with the 'tag peptide' encoded by the tmRNA and targeted for degradation. The ribosome is freed to recommence translation, which seems to be the essential function of trans-translation.</text>
</comment>
<comment type="subcellular location">
    <subcellularLocation>
        <location evidence="1">Cytoplasm</location>
    </subcellularLocation>
    <text evidence="1">The tmRNA-SmpB complex associates with stalled 70S ribosomes.</text>
</comment>
<comment type="similarity">
    <text evidence="1">Belongs to the SmpB family.</text>
</comment>
<dbReference type="EMBL" id="CP001614">
    <property type="protein sequence ID" value="ACR13568.1"/>
    <property type="molecule type" value="Genomic_DNA"/>
</dbReference>
<dbReference type="RefSeq" id="WP_015819682.1">
    <property type="nucleotide sequence ID" value="NC_012997.1"/>
</dbReference>
<dbReference type="SMR" id="C5BQH7"/>
<dbReference type="STRING" id="377629.TERTU_3305"/>
<dbReference type="KEGG" id="ttu:TERTU_3305"/>
<dbReference type="eggNOG" id="COG0691">
    <property type="taxonomic scope" value="Bacteria"/>
</dbReference>
<dbReference type="HOGENOM" id="CLU_108953_3_0_6"/>
<dbReference type="OrthoDB" id="9805462at2"/>
<dbReference type="Proteomes" id="UP000009080">
    <property type="component" value="Chromosome"/>
</dbReference>
<dbReference type="GO" id="GO:0005829">
    <property type="term" value="C:cytosol"/>
    <property type="evidence" value="ECO:0007669"/>
    <property type="project" value="TreeGrafter"/>
</dbReference>
<dbReference type="GO" id="GO:0003723">
    <property type="term" value="F:RNA binding"/>
    <property type="evidence" value="ECO:0007669"/>
    <property type="project" value="UniProtKB-UniRule"/>
</dbReference>
<dbReference type="GO" id="GO:0070929">
    <property type="term" value="P:trans-translation"/>
    <property type="evidence" value="ECO:0007669"/>
    <property type="project" value="UniProtKB-UniRule"/>
</dbReference>
<dbReference type="CDD" id="cd09294">
    <property type="entry name" value="SmpB"/>
    <property type="match status" value="1"/>
</dbReference>
<dbReference type="Gene3D" id="2.40.280.10">
    <property type="match status" value="1"/>
</dbReference>
<dbReference type="HAMAP" id="MF_00023">
    <property type="entry name" value="SmpB"/>
    <property type="match status" value="1"/>
</dbReference>
<dbReference type="InterPro" id="IPR023620">
    <property type="entry name" value="SmpB"/>
</dbReference>
<dbReference type="InterPro" id="IPR000037">
    <property type="entry name" value="SsrA-bd_prot"/>
</dbReference>
<dbReference type="InterPro" id="IPR020081">
    <property type="entry name" value="SsrA-bd_prot_CS"/>
</dbReference>
<dbReference type="NCBIfam" id="NF003843">
    <property type="entry name" value="PRK05422.1"/>
    <property type="match status" value="1"/>
</dbReference>
<dbReference type="NCBIfam" id="TIGR00086">
    <property type="entry name" value="smpB"/>
    <property type="match status" value="1"/>
</dbReference>
<dbReference type="PANTHER" id="PTHR30308:SF2">
    <property type="entry name" value="SSRA-BINDING PROTEIN"/>
    <property type="match status" value="1"/>
</dbReference>
<dbReference type="PANTHER" id="PTHR30308">
    <property type="entry name" value="TMRNA-BINDING COMPONENT OF TRANS-TRANSLATION TAGGING COMPLEX"/>
    <property type="match status" value="1"/>
</dbReference>
<dbReference type="Pfam" id="PF01668">
    <property type="entry name" value="SmpB"/>
    <property type="match status" value="1"/>
</dbReference>
<dbReference type="SUPFAM" id="SSF74982">
    <property type="entry name" value="Small protein B (SmpB)"/>
    <property type="match status" value="1"/>
</dbReference>
<dbReference type="PROSITE" id="PS01317">
    <property type="entry name" value="SSRP"/>
    <property type="match status" value="1"/>
</dbReference>
<name>SSRP_TERTT</name>